<evidence type="ECO:0000255" key="1">
    <source>
        <dbReference type="HAMAP-Rule" id="MF_00625"/>
    </source>
</evidence>
<protein>
    <recommendedName>
        <fullName evidence="1">Selenide, water dikinase</fullName>
        <ecNumber evidence="1">2.7.9.3</ecNumber>
    </recommendedName>
    <alternativeName>
        <fullName evidence="1">Selenium donor protein</fullName>
    </alternativeName>
    <alternativeName>
        <fullName evidence="1">Selenophosphate synthase</fullName>
    </alternativeName>
</protein>
<feature type="chain" id="PRO_1000082604" description="Selenide, water dikinase">
    <location>
        <begin position="1"/>
        <end position="340"/>
    </location>
</feature>
<feature type="active site" evidence="1">
    <location>
        <position position="13"/>
    </location>
</feature>
<feature type="binding site" description="in other chain" evidence="1">
    <location>
        <position position="16"/>
    </location>
    <ligand>
        <name>ATP</name>
        <dbReference type="ChEBI" id="CHEBI:30616"/>
        <note>ligand shared between dimeric partners</note>
    </ligand>
</feature>
<feature type="binding site" description="in other chain" evidence="1">
    <location>
        <begin position="43"/>
        <end position="45"/>
    </location>
    <ligand>
        <name>ATP</name>
        <dbReference type="ChEBI" id="CHEBI:30616"/>
        <note>ligand shared between dimeric partners</note>
    </ligand>
</feature>
<feature type="binding site" evidence="1">
    <location>
        <position position="46"/>
    </location>
    <ligand>
        <name>Mg(2+)</name>
        <dbReference type="ChEBI" id="CHEBI:18420"/>
    </ligand>
</feature>
<feature type="binding site" description="in other chain" evidence="1">
    <location>
        <position position="63"/>
    </location>
    <ligand>
        <name>ATP</name>
        <dbReference type="ChEBI" id="CHEBI:30616"/>
        <note>ligand shared between dimeric partners</note>
    </ligand>
</feature>
<feature type="binding site" description="in other chain" evidence="1">
    <location>
        <position position="86"/>
    </location>
    <ligand>
        <name>ATP</name>
        <dbReference type="ChEBI" id="CHEBI:30616"/>
        <note>ligand shared between dimeric partners</note>
    </ligand>
</feature>
<feature type="binding site" evidence="1">
    <location>
        <position position="86"/>
    </location>
    <ligand>
        <name>Mg(2+)</name>
        <dbReference type="ChEBI" id="CHEBI:18420"/>
    </ligand>
</feature>
<feature type="binding site" evidence="1">
    <location>
        <begin position="133"/>
        <end position="135"/>
    </location>
    <ligand>
        <name>ATP</name>
        <dbReference type="ChEBI" id="CHEBI:30616"/>
        <note>ligand shared between dimeric partners</note>
    </ligand>
</feature>
<feature type="binding site" evidence="1">
    <location>
        <position position="221"/>
    </location>
    <ligand>
        <name>Mg(2+)</name>
        <dbReference type="ChEBI" id="CHEBI:18420"/>
    </ligand>
</feature>
<feature type="site" description="Important for catalytic activity" evidence="1">
    <location>
        <position position="16"/>
    </location>
</feature>
<name>SELD_DESHY</name>
<comment type="function">
    <text evidence="1">Synthesizes selenophosphate from selenide and ATP.</text>
</comment>
<comment type="catalytic activity">
    <reaction evidence="1">
        <text>hydrogenselenide + ATP + H2O = selenophosphate + AMP + phosphate + 2 H(+)</text>
        <dbReference type="Rhea" id="RHEA:18737"/>
        <dbReference type="ChEBI" id="CHEBI:15377"/>
        <dbReference type="ChEBI" id="CHEBI:15378"/>
        <dbReference type="ChEBI" id="CHEBI:16144"/>
        <dbReference type="ChEBI" id="CHEBI:29317"/>
        <dbReference type="ChEBI" id="CHEBI:30616"/>
        <dbReference type="ChEBI" id="CHEBI:43474"/>
        <dbReference type="ChEBI" id="CHEBI:456215"/>
        <dbReference type="EC" id="2.7.9.3"/>
    </reaction>
</comment>
<comment type="cofactor">
    <cofactor evidence="1">
        <name>Mg(2+)</name>
        <dbReference type="ChEBI" id="CHEBI:18420"/>
    </cofactor>
    <text evidence="1">Binds 1 Mg(2+) ion per monomer.</text>
</comment>
<comment type="subunit">
    <text evidence="1">Homodimer.</text>
</comment>
<comment type="similarity">
    <text evidence="1">Belongs to the selenophosphate synthase 1 family. Class I subfamily.</text>
</comment>
<accession>Q24NA9</accession>
<keyword id="KW-0067">ATP-binding</keyword>
<keyword id="KW-0418">Kinase</keyword>
<keyword id="KW-0460">Magnesium</keyword>
<keyword id="KW-0479">Metal-binding</keyword>
<keyword id="KW-0547">Nucleotide-binding</keyword>
<keyword id="KW-1185">Reference proteome</keyword>
<keyword id="KW-0711">Selenium</keyword>
<keyword id="KW-0808">Transferase</keyword>
<organism>
    <name type="scientific">Desulfitobacterium hafniense (strain Y51)</name>
    <dbReference type="NCBI Taxonomy" id="138119"/>
    <lineage>
        <taxon>Bacteria</taxon>
        <taxon>Bacillati</taxon>
        <taxon>Bacillota</taxon>
        <taxon>Clostridia</taxon>
        <taxon>Eubacteriales</taxon>
        <taxon>Desulfitobacteriaceae</taxon>
        <taxon>Desulfitobacterium</taxon>
    </lineage>
</organism>
<gene>
    <name evidence="1" type="primary">selD</name>
    <name type="ordered locus">DSY4694</name>
</gene>
<dbReference type="EC" id="2.7.9.3" evidence="1"/>
<dbReference type="EMBL" id="AP008230">
    <property type="protein sequence ID" value="BAE86483.1"/>
    <property type="molecule type" value="Genomic_DNA"/>
</dbReference>
<dbReference type="RefSeq" id="WP_011462047.1">
    <property type="nucleotide sequence ID" value="NC_007907.1"/>
</dbReference>
<dbReference type="SMR" id="Q24NA9"/>
<dbReference type="STRING" id="138119.DSY4694"/>
<dbReference type="KEGG" id="dsy:DSY4694"/>
<dbReference type="eggNOG" id="COG0709">
    <property type="taxonomic scope" value="Bacteria"/>
</dbReference>
<dbReference type="HOGENOM" id="CLU_032859_0_1_9"/>
<dbReference type="Proteomes" id="UP000001946">
    <property type="component" value="Chromosome"/>
</dbReference>
<dbReference type="GO" id="GO:0005737">
    <property type="term" value="C:cytoplasm"/>
    <property type="evidence" value="ECO:0007669"/>
    <property type="project" value="TreeGrafter"/>
</dbReference>
<dbReference type="GO" id="GO:0005524">
    <property type="term" value="F:ATP binding"/>
    <property type="evidence" value="ECO:0007669"/>
    <property type="project" value="UniProtKB-UniRule"/>
</dbReference>
<dbReference type="GO" id="GO:0000287">
    <property type="term" value="F:magnesium ion binding"/>
    <property type="evidence" value="ECO:0007669"/>
    <property type="project" value="UniProtKB-UniRule"/>
</dbReference>
<dbReference type="GO" id="GO:0004756">
    <property type="term" value="F:selenide, water dikinase activity"/>
    <property type="evidence" value="ECO:0007669"/>
    <property type="project" value="UniProtKB-UniRule"/>
</dbReference>
<dbReference type="GO" id="GO:0016260">
    <property type="term" value="P:selenocysteine biosynthetic process"/>
    <property type="evidence" value="ECO:0007669"/>
    <property type="project" value="InterPro"/>
</dbReference>
<dbReference type="CDD" id="cd02195">
    <property type="entry name" value="SelD"/>
    <property type="match status" value="1"/>
</dbReference>
<dbReference type="FunFam" id="3.30.1330.10:FF:000003">
    <property type="entry name" value="Selenide, water dikinase"/>
    <property type="match status" value="1"/>
</dbReference>
<dbReference type="Gene3D" id="3.90.650.10">
    <property type="entry name" value="PurM-like C-terminal domain"/>
    <property type="match status" value="1"/>
</dbReference>
<dbReference type="Gene3D" id="3.30.1330.10">
    <property type="entry name" value="PurM-like, N-terminal domain"/>
    <property type="match status" value="1"/>
</dbReference>
<dbReference type="HAMAP" id="MF_00625">
    <property type="entry name" value="SelD"/>
    <property type="match status" value="1"/>
</dbReference>
<dbReference type="InterPro" id="IPR010918">
    <property type="entry name" value="PurM-like_C_dom"/>
</dbReference>
<dbReference type="InterPro" id="IPR036676">
    <property type="entry name" value="PurM-like_C_sf"/>
</dbReference>
<dbReference type="InterPro" id="IPR016188">
    <property type="entry name" value="PurM-like_N"/>
</dbReference>
<dbReference type="InterPro" id="IPR036921">
    <property type="entry name" value="PurM-like_N_sf"/>
</dbReference>
<dbReference type="InterPro" id="IPR023061">
    <property type="entry name" value="SelD_I"/>
</dbReference>
<dbReference type="InterPro" id="IPR004536">
    <property type="entry name" value="SPS/SelD"/>
</dbReference>
<dbReference type="NCBIfam" id="NF002098">
    <property type="entry name" value="PRK00943.1"/>
    <property type="match status" value="1"/>
</dbReference>
<dbReference type="NCBIfam" id="TIGR00476">
    <property type="entry name" value="selD"/>
    <property type="match status" value="1"/>
</dbReference>
<dbReference type="PANTHER" id="PTHR10256:SF0">
    <property type="entry name" value="INACTIVE SELENIDE, WATER DIKINASE-LIKE PROTEIN-RELATED"/>
    <property type="match status" value="1"/>
</dbReference>
<dbReference type="PANTHER" id="PTHR10256">
    <property type="entry name" value="SELENIDE, WATER DIKINASE"/>
    <property type="match status" value="1"/>
</dbReference>
<dbReference type="Pfam" id="PF00586">
    <property type="entry name" value="AIRS"/>
    <property type="match status" value="1"/>
</dbReference>
<dbReference type="Pfam" id="PF02769">
    <property type="entry name" value="AIRS_C"/>
    <property type="match status" value="1"/>
</dbReference>
<dbReference type="PIRSF" id="PIRSF036407">
    <property type="entry name" value="Selenphspht_syn"/>
    <property type="match status" value="1"/>
</dbReference>
<dbReference type="SUPFAM" id="SSF56042">
    <property type="entry name" value="PurM C-terminal domain-like"/>
    <property type="match status" value="1"/>
</dbReference>
<dbReference type="SUPFAM" id="SSF55326">
    <property type="entry name" value="PurM N-terminal domain-like"/>
    <property type="match status" value="1"/>
</dbReference>
<sequence length="340" mass="36125">MKSFLSSCTTGGCGAKIGPGELSKVLSGLPVFQDPQLLVGFDASDDAAVYQINEDTAIVSTVDFFTPMVEDPRIFGRIAAANALSDVYAMGGSPLFALNLVCYPEREDIQDLGEILAGGAEKLQEAGAVLCGGHSIYDREPKYGLAVTGRLNPRQIWKNNTPQPGDRLILTKPLGVGIVMAALRGEMAEAAAVEAALASMQRLNKYAAEKARDFPIHACTDITGFGLLAHTREMAGGSTTIVLYPSALPYIAQAYTYAQGYLLTAAGQRNRNFMEGAVEFGDTPFPLQELMLDPQTSGGLLLSVPGDCAQEALRAIQEAEPQAALIGEVVSRQALPILLR</sequence>
<reference key="1">
    <citation type="journal article" date="2006" name="J. Bacteriol.">
        <title>Complete genome sequence of the dehalorespiring bacterium Desulfitobacterium hafniense Y51 and comparison with Dehalococcoides ethenogenes 195.</title>
        <authorList>
            <person name="Nonaka H."/>
            <person name="Keresztes G."/>
            <person name="Shinoda Y."/>
            <person name="Ikenaga Y."/>
            <person name="Abe M."/>
            <person name="Naito K."/>
            <person name="Inatomi K."/>
            <person name="Furukawa K."/>
            <person name="Inui M."/>
            <person name="Yukawa H."/>
        </authorList>
    </citation>
    <scope>NUCLEOTIDE SEQUENCE [LARGE SCALE GENOMIC DNA]</scope>
    <source>
        <strain>Y51</strain>
    </source>
</reference>
<proteinExistence type="inferred from homology"/>